<keyword id="KW-0028">Amino-acid biosynthesis</keyword>
<keyword id="KW-0100">Branched-chain amino acid biosynthesis</keyword>
<keyword id="KW-0460">Magnesium</keyword>
<keyword id="KW-0479">Metal-binding</keyword>
<keyword id="KW-0521">NADP</keyword>
<keyword id="KW-0560">Oxidoreductase</keyword>
<keyword id="KW-0677">Repeat</keyword>
<comment type="function">
    <text evidence="1">Involved in the biosynthesis of branched-chain amino acids (BCAA). Catalyzes an alkyl-migration followed by a ketol-acid reduction of (S)-2-acetolactate (S2AL) to yield (R)-2,3-dihydroxy-isovalerate. In the isomerase reaction, S2AL is rearranged via a Mg-dependent methyl migration to produce 3-hydroxy-3-methyl-2-ketobutyrate (HMKB). In the reductase reaction, this 2-ketoacid undergoes a metal-dependent reduction by NADPH to yield (R)-2,3-dihydroxy-isovalerate.</text>
</comment>
<comment type="catalytic activity">
    <reaction evidence="1">
        <text>(2R)-2,3-dihydroxy-3-methylbutanoate + NADP(+) = (2S)-2-acetolactate + NADPH + H(+)</text>
        <dbReference type="Rhea" id="RHEA:22068"/>
        <dbReference type="ChEBI" id="CHEBI:15378"/>
        <dbReference type="ChEBI" id="CHEBI:49072"/>
        <dbReference type="ChEBI" id="CHEBI:57783"/>
        <dbReference type="ChEBI" id="CHEBI:58349"/>
        <dbReference type="ChEBI" id="CHEBI:58476"/>
        <dbReference type="EC" id="1.1.1.86"/>
    </reaction>
</comment>
<comment type="catalytic activity">
    <reaction evidence="1">
        <text>(2R,3R)-2,3-dihydroxy-3-methylpentanoate + NADP(+) = (S)-2-ethyl-2-hydroxy-3-oxobutanoate + NADPH + H(+)</text>
        <dbReference type="Rhea" id="RHEA:13493"/>
        <dbReference type="ChEBI" id="CHEBI:15378"/>
        <dbReference type="ChEBI" id="CHEBI:49256"/>
        <dbReference type="ChEBI" id="CHEBI:49258"/>
        <dbReference type="ChEBI" id="CHEBI:57783"/>
        <dbReference type="ChEBI" id="CHEBI:58349"/>
        <dbReference type="EC" id="1.1.1.86"/>
    </reaction>
</comment>
<comment type="cofactor">
    <cofactor evidence="1">
        <name>Mg(2+)</name>
        <dbReference type="ChEBI" id="CHEBI:18420"/>
    </cofactor>
    <text evidence="1">Binds 2 magnesium ions per subunit.</text>
</comment>
<comment type="pathway">
    <text evidence="1">Amino-acid biosynthesis; L-isoleucine biosynthesis; L-isoleucine from 2-oxobutanoate: step 2/4.</text>
</comment>
<comment type="pathway">
    <text evidence="1">Amino-acid biosynthesis; L-valine biosynthesis; L-valine from pyruvate: step 2/4.</text>
</comment>
<comment type="similarity">
    <text evidence="1">Belongs to the ketol-acid reductoisomerase family.</text>
</comment>
<dbReference type="EC" id="1.1.1.86" evidence="1"/>
<dbReference type="EMBL" id="CP001127">
    <property type="protein sequence ID" value="ACF90900.1"/>
    <property type="molecule type" value="Genomic_DNA"/>
</dbReference>
<dbReference type="RefSeq" id="WP_000024953.1">
    <property type="nucleotide sequence ID" value="NC_011094.1"/>
</dbReference>
<dbReference type="SMR" id="B4TNS6"/>
<dbReference type="KEGG" id="sew:SeSA_A4119"/>
<dbReference type="HOGENOM" id="CLU_551905_0_0_6"/>
<dbReference type="UniPathway" id="UPA00047">
    <property type="reaction ID" value="UER00056"/>
</dbReference>
<dbReference type="UniPathway" id="UPA00049">
    <property type="reaction ID" value="UER00060"/>
</dbReference>
<dbReference type="Proteomes" id="UP000001865">
    <property type="component" value="Chromosome"/>
</dbReference>
<dbReference type="GO" id="GO:0005829">
    <property type="term" value="C:cytosol"/>
    <property type="evidence" value="ECO:0007669"/>
    <property type="project" value="TreeGrafter"/>
</dbReference>
<dbReference type="GO" id="GO:0004455">
    <property type="term" value="F:ketol-acid reductoisomerase activity"/>
    <property type="evidence" value="ECO:0007669"/>
    <property type="project" value="UniProtKB-UniRule"/>
</dbReference>
<dbReference type="GO" id="GO:0000287">
    <property type="term" value="F:magnesium ion binding"/>
    <property type="evidence" value="ECO:0007669"/>
    <property type="project" value="UniProtKB-UniRule"/>
</dbReference>
<dbReference type="GO" id="GO:0009097">
    <property type="term" value="P:isoleucine biosynthetic process"/>
    <property type="evidence" value="ECO:0007669"/>
    <property type="project" value="UniProtKB-UniRule"/>
</dbReference>
<dbReference type="GO" id="GO:0009099">
    <property type="term" value="P:L-valine biosynthetic process"/>
    <property type="evidence" value="ECO:0007669"/>
    <property type="project" value="UniProtKB-UniRule"/>
</dbReference>
<dbReference type="FunFam" id="1.10.1040.10:FF:000007">
    <property type="entry name" value="Ketol-acid reductoisomerase (NADP(+))"/>
    <property type="match status" value="1"/>
</dbReference>
<dbReference type="FunFam" id="3.40.50.720:FF:000043">
    <property type="entry name" value="Ketol-acid reductoisomerase (NADP(+))"/>
    <property type="match status" value="1"/>
</dbReference>
<dbReference type="Gene3D" id="1.10.1040.10">
    <property type="entry name" value="N-(1-d-carboxylethyl)-l-norvaline Dehydrogenase, domain 2"/>
    <property type="match status" value="1"/>
</dbReference>
<dbReference type="Gene3D" id="3.40.50.720">
    <property type="entry name" value="NAD(P)-binding Rossmann-like Domain"/>
    <property type="match status" value="1"/>
</dbReference>
<dbReference type="HAMAP" id="MF_00435">
    <property type="entry name" value="IlvC"/>
    <property type="match status" value="1"/>
</dbReference>
<dbReference type="InterPro" id="IPR008927">
    <property type="entry name" value="6-PGluconate_DH-like_C_sf"/>
</dbReference>
<dbReference type="InterPro" id="IPR013328">
    <property type="entry name" value="6PGD_dom2"/>
</dbReference>
<dbReference type="InterPro" id="IPR013023">
    <property type="entry name" value="KARI"/>
</dbReference>
<dbReference type="InterPro" id="IPR000506">
    <property type="entry name" value="KARI_C"/>
</dbReference>
<dbReference type="InterPro" id="IPR013116">
    <property type="entry name" value="KARI_N"/>
</dbReference>
<dbReference type="InterPro" id="IPR036291">
    <property type="entry name" value="NAD(P)-bd_dom_sf"/>
</dbReference>
<dbReference type="NCBIfam" id="TIGR00465">
    <property type="entry name" value="ilvC"/>
    <property type="match status" value="1"/>
</dbReference>
<dbReference type="NCBIfam" id="NF003557">
    <property type="entry name" value="PRK05225.1"/>
    <property type="match status" value="1"/>
</dbReference>
<dbReference type="PANTHER" id="PTHR21371">
    <property type="entry name" value="KETOL-ACID REDUCTOISOMERASE, MITOCHONDRIAL"/>
    <property type="match status" value="1"/>
</dbReference>
<dbReference type="PANTHER" id="PTHR21371:SF1">
    <property type="entry name" value="KETOL-ACID REDUCTOISOMERASE, MITOCHONDRIAL"/>
    <property type="match status" value="1"/>
</dbReference>
<dbReference type="Pfam" id="PF01450">
    <property type="entry name" value="KARI_C"/>
    <property type="match status" value="2"/>
</dbReference>
<dbReference type="Pfam" id="PF07991">
    <property type="entry name" value="KARI_N"/>
    <property type="match status" value="1"/>
</dbReference>
<dbReference type="SUPFAM" id="SSF48179">
    <property type="entry name" value="6-phosphogluconate dehydrogenase C-terminal domain-like"/>
    <property type="match status" value="2"/>
</dbReference>
<dbReference type="SUPFAM" id="SSF51735">
    <property type="entry name" value="NAD(P)-binding Rossmann-fold domains"/>
    <property type="match status" value="1"/>
</dbReference>
<dbReference type="PROSITE" id="PS51851">
    <property type="entry name" value="KARI_C"/>
    <property type="match status" value="2"/>
</dbReference>
<dbReference type="PROSITE" id="PS51850">
    <property type="entry name" value="KARI_N"/>
    <property type="match status" value="1"/>
</dbReference>
<accession>B4TNS6</accession>
<protein>
    <recommendedName>
        <fullName evidence="1">Ketol-acid reductoisomerase (NADP(+))</fullName>
        <shortName evidence="1">KARI</shortName>
        <ecNumber evidence="1">1.1.1.86</ecNumber>
    </recommendedName>
    <alternativeName>
        <fullName evidence="1">Acetohydroxy-acid isomeroreductase</fullName>
        <shortName evidence="1">AHIR</shortName>
    </alternativeName>
    <alternativeName>
        <fullName evidence="1">Alpha-keto-beta-hydroxylacyl reductoisomerase</fullName>
    </alternativeName>
    <alternativeName>
        <fullName evidence="1">Ketol-acid reductoisomerase type 2</fullName>
    </alternativeName>
    <alternativeName>
        <fullName evidence="1">Ketol-acid reductoisomerase type II</fullName>
    </alternativeName>
</protein>
<sequence>MANYFNTLNLRQQLAQLGKCRFMGRDEFADGASYLQGKKVVIVGCGAQGLNQGLNMRDSGLDISYALRKEAITEKRASWRKATENGFKVGTYEELIPQADLVVNLTPDKQHSDVVRSVQPLMKDGAALGYSHGFNIVEVGEQIRKDITVVMVAPKCPGTEVREEYKRGFGVPTLIAVHPENDPKGEGMAIAKAWVAATGGHRAGVLESSFVAEVKSDLMGEQTILCGMLQAGSLLCFDKLVAEGTDPAYAEKLIQFGWETITEALKQGGITLMMDRLSNPAKLRAYALSEQLKEIMAPLFQKHMDDIISGEFSSGMMADWANDDKKLLTWREETGKTAFETAPQFEGKIGEQEYFDKGVLMIAMVKAGVELAFETMVDSGIIEESAYYESLHELPLIANTIARKRLYEMNVVISDTAEYGNYLFSYACVPLLKPFMAELQPGDLGSAIPEGAVDNAQLRDVNDAIRSHAIEQVGKKLRGYMTDMKRIAVAG</sequence>
<organism>
    <name type="scientific">Salmonella schwarzengrund (strain CVM19633)</name>
    <dbReference type="NCBI Taxonomy" id="439843"/>
    <lineage>
        <taxon>Bacteria</taxon>
        <taxon>Pseudomonadati</taxon>
        <taxon>Pseudomonadota</taxon>
        <taxon>Gammaproteobacteria</taxon>
        <taxon>Enterobacterales</taxon>
        <taxon>Enterobacteriaceae</taxon>
        <taxon>Salmonella</taxon>
    </lineage>
</organism>
<gene>
    <name evidence="1" type="primary">ilvC</name>
    <name type="ordered locus">SeSA_A4119</name>
</gene>
<reference key="1">
    <citation type="journal article" date="2011" name="J. Bacteriol.">
        <title>Comparative genomics of 28 Salmonella enterica isolates: evidence for CRISPR-mediated adaptive sublineage evolution.</title>
        <authorList>
            <person name="Fricke W.F."/>
            <person name="Mammel M.K."/>
            <person name="McDermott P.F."/>
            <person name="Tartera C."/>
            <person name="White D.G."/>
            <person name="Leclerc J.E."/>
            <person name="Ravel J."/>
            <person name="Cebula T.A."/>
        </authorList>
    </citation>
    <scope>NUCLEOTIDE SEQUENCE [LARGE SCALE GENOMIC DNA]</scope>
    <source>
        <strain>CVM19633</strain>
    </source>
</reference>
<name>ILVC_SALSV</name>
<evidence type="ECO:0000255" key="1">
    <source>
        <dbReference type="HAMAP-Rule" id="MF_00435"/>
    </source>
</evidence>
<evidence type="ECO:0000255" key="2">
    <source>
        <dbReference type="PROSITE-ProRule" id="PRU01197"/>
    </source>
</evidence>
<evidence type="ECO:0000255" key="3">
    <source>
        <dbReference type="PROSITE-ProRule" id="PRU01198"/>
    </source>
</evidence>
<proteinExistence type="inferred from homology"/>
<feature type="chain" id="PRO_1000190992" description="Ketol-acid reductoisomerase (NADP(+))">
    <location>
        <begin position="1"/>
        <end position="491"/>
    </location>
</feature>
<feature type="domain" description="KARI N-terminal Rossmann" evidence="2">
    <location>
        <begin position="15"/>
        <end position="208"/>
    </location>
</feature>
<feature type="domain" description="KARI C-terminal knotted 1" evidence="3">
    <location>
        <begin position="209"/>
        <end position="344"/>
    </location>
</feature>
<feature type="domain" description="KARI C-terminal knotted 2" evidence="3">
    <location>
        <begin position="345"/>
        <end position="484"/>
    </location>
</feature>
<feature type="active site" evidence="1">
    <location>
        <position position="132"/>
    </location>
</feature>
<feature type="binding site" evidence="1">
    <location>
        <begin position="45"/>
        <end position="48"/>
    </location>
    <ligand>
        <name>NADP(+)</name>
        <dbReference type="ChEBI" id="CHEBI:58349"/>
    </ligand>
</feature>
<feature type="binding site" evidence="1">
    <location>
        <position position="68"/>
    </location>
    <ligand>
        <name>NADP(+)</name>
        <dbReference type="ChEBI" id="CHEBI:58349"/>
    </ligand>
</feature>
<feature type="binding site" evidence="1">
    <location>
        <position position="76"/>
    </location>
    <ligand>
        <name>NADP(+)</name>
        <dbReference type="ChEBI" id="CHEBI:58349"/>
    </ligand>
</feature>
<feature type="binding site" evidence="1">
    <location>
        <position position="78"/>
    </location>
    <ligand>
        <name>NADP(+)</name>
        <dbReference type="ChEBI" id="CHEBI:58349"/>
    </ligand>
</feature>
<feature type="binding site" evidence="1">
    <location>
        <begin position="108"/>
        <end position="110"/>
    </location>
    <ligand>
        <name>NADP(+)</name>
        <dbReference type="ChEBI" id="CHEBI:58349"/>
    </ligand>
</feature>
<feature type="binding site" evidence="1">
    <location>
        <position position="158"/>
    </location>
    <ligand>
        <name>NADP(+)</name>
        <dbReference type="ChEBI" id="CHEBI:58349"/>
    </ligand>
</feature>
<feature type="binding site" evidence="1">
    <location>
        <position position="217"/>
    </location>
    <ligand>
        <name>Mg(2+)</name>
        <dbReference type="ChEBI" id="CHEBI:18420"/>
        <label>1</label>
    </ligand>
</feature>
<feature type="binding site" evidence="1">
    <location>
        <position position="217"/>
    </location>
    <ligand>
        <name>Mg(2+)</name>
        <dbReference type="ChEBI" id="CHEBI:18420"/>
        <label>2</label>
    </ligand>
</feature>
<feature type="binding site" evidence="1">
    <location>
        <position position="221"/>
    </location>
    <ligand>
        <name>Mg(2+)</name>
        <dbReference type="ChEBI" id="CHEBI:18420"/>
        <label>1</label>
    </ligand>
</feature>
<feature type="binding site" evidence="1">
    <location>
        <position position="389"/>
    </location>
    <ligand>
        <name>Mg(2+)</name>
        <dbReference type="ChEBI" id="CHEBI:18420"/>
        <label>2</label>
    </ligand>
</feature>
<feature type="binding site" evidence="1">
    <location>
        <position position="393"/>
    </location>
    <ligand>
        <name>Mg(2+)</name>
        <dbReference type="ChEBI" id="CHEBI:18420"/>
        <label>2</label>
    </ligand>
</feature>
<feature type="binding site" evidence="1">
    <location>
        <position position="414"/>
    </location>
    <ligand>
        <name>substrate</name>
    </ligand>
</feature>